<sequence>MRIVVIAVGRLKQGPERELAERYRERFDDLGRKLGFRGLDLHELPESRARDAATRISEEAAAIAALIPGRSVLVCLDERGQNIDSASLAAQIGRWRDEGVPAAVFVIGGADGLSPELRRRAKLGVAFGAATWPHQIVRVLLFEQIYRTATILAGHPYHRA</sequence>
<protein>
    <recommendedName>
        <fullName evidence="1">Ribosomal RNA large subunit methyltransferase H</fullName>
        <ecNumber evidence="1">2.1.1.177</ecNumber>
    </recommendedName>
    <alternativeName>
        <fullName evidence="1">23S rRNA (pseudouridine1915-N3)-methyltransferase</fullName>
    </alternativeName>
    <alternativeName>
        <fullName evidence="1">23S rRNA m3Psi1915 methyltransferase</fullName>
    </alternativeName>
    <alternativeName>
        <fullName evidence="1">rRNA (pseudouridine-N3-)-methyltransferase RlmH</fullName>
    </alternativeName>
</protein>
<keyword id="KW-0963">Cytoplasm</keyword>
<keyword id="KW-0489">Methyltransferase</keyword>
<keyword id="KW-1185">Reference proteome</keyword>
<keyword id="KW-0698">rRNA processing</keyword>
<keyword id="KW-0949">S-adenosyl-L-methionine</keyword>
<keyword id="KW-0808">Transferase</keyword>
<evidence type="ECO:0000255" key="1">
    <source>
        <dbReference type="HAMAP-Rule" id="MF_00658"/>
    </source>
</evidence>
<gene>
    <name evidence="1" type="primary">rlmH</name>
    <name type="ordered locus">BBta_0416</name>
</gene>
<reference key="1">
    <citation type="journal article" date="2007" name="Science">
        <title>Legumes symbioses: absence of nod genes in photosynthetic bradyrhizobia.</title>
        <authorList>
            <person name="Giraud E."/>
            <person name="Moulin L."/>
            <person name="Vallenet D."/>
            <person name="Barbe V."/>
            <person name="Cytryn E."/>
            <person name="Avarre J.-C."/>
            <person name="Jaubert M."/>
            <person name="Simon D."/>
            <person name="Cartieaux F."/>
            <person name="Prin Y."/>
            <person name="Bena G."/>
            <person name="Hannibal L."/>
            <person name="Fardoux J."/>
            <person name="Kojadinovic M."/>
            <person name="Vuillet L."/>
            <person name="Lajus A."/>
            <person name="Cruveiller S."/>
            <person name="Rouy Z."/>
            <person name="Mangenot S."/>
            <person name="Segurens B."/>
            <person name="Dossat C."/>
            <person name="Franck W.L."/>
            <person name="Chang W.-S."/>
            <person name="Saunders E."/>
            <person name="Bruce D."/>
            <person name="Richardson P."/>
            <person name="Normand P."/>
            <person name="Dreyfus B."/>
            <person name="Pignol D."/>
            <person name="Stacey G."/>
            <person name="Emerich D."/>
            <person name="Vermeglio A."/>
            <person name="Medigue C."/>
            <person name="Sadowsky M."/>
        </authorList>
    </citation>
    <scope>NUCLEOTIDE SEQUENCE [LARGE SCALE GENOMIC DNA]</scope>
    <source>
        <strain>BTAi1 / ATCC BAA-1182</strain>
    </source>
</reference>
<proteinExistence type="inferred from homology"/>
<comment type="function">
    <text evidence="1">Specifically methylates the pseudouridine at position 1915 (m3Psi1915) in 23S rRNA.</text>
</comment>
<comment type="catalytic activity">
    <reaction evidence="1">
        <text>pseudouridine(1915) in 23S rRNA + S-adenosyl-L-methionine = N(3)-methylpseudouridine(1915) in 23S rRNA + S-adenosyl-L-homocysteine + H(+)</text>
        <dbReference type="Rhea" id="RHEA:42752"/>
        <dbReference type="Rhea" id="RHEA-COMP:10221"/>
        <dbReference type="Rhea" id="RHEA-COMP:10222"/>
        <dbReference type="ChEBI" id="CHEBI:15378"/>
        <dbReference type="ChEBI" id="CHEBI:57856"/>
        <dbReference type="ChEBI" id="CHEBI:59789"/>
        <dbReference type="ChEBI" id="CHEBI:65314"/>
        <dbReference type="ChEBI" id="CHEBI:74486"/>
        <dbReference type="EC" id="2.1.1.177"/>
    </reaction>
</comment>
<comment type="subunit">
    <text evidence="1">Homodimer.</text>
</comment>
<comment type="subcellular location">
    <subcellularLocation>
        <location evidence="1">Cytoplasm</location>
    </subcellularLocation>
</comment>
<comment type="similarity">
    <text evidence="1">Belongs to the RNA methyltransferase RlmH family.</text>
</comment>
<feature type="chain" id="PRO_1000061760" description="Ribosomal RNA large subunit methyltransferase H">
    <location>
        <begin position="1"/>
        <end position="160"/>
    </location>
</feature>
<feature type="binding site" evidence="1">
    <location>
        <position position="76"/>
    </location>
    <ligand>
        <name>S-adenosyl-L-methionine</name>
        <dbReference type="ChEBI" id="CHEBI:59789"/>
    </ligand>
</feature>
<feature type="binding site" evidence="1">
    <location>
        <position position="108"/>
    </location>
    <ligand>
        <name>S-adenosyl-L-methionine</name>
        <dbReference type="ChEBI" id="CHEBI:59789"/>
    </ligand>
</feature>
<dbReference type="EC" id="2.1.1.177" evidence="1"/>
<dbReference type="EMBL" id="CP000494">
    <property type="protein sequence ID" value="ABQ32702.1"/>
    <property type="molecule type" value="Genomic_DNA"/>
</dbReference>
<dbReference type="RefSeq" id="WP_012040755.1">
    <property type="nucleotide sequence ID" value="NC_009485.1"/>
</dbReference>
<dbReference type="SMR" id="A5E958"/>
<dbReference type="STRING" id="288000.BBta_0416"/>
<dbReference type="KEGG" id="bbt:BBta_0416"/>
<dbReference type="eggNOG" id="COG1576">
    <property type="taxonomic scope" value="Bacteria"/>
</dbReference>
<dbReference type="HOGENOM" id="CLU_100552_1_1_5"/>
<dbReference type="OrthoDB" id="9806643at2"/>
<dbReference type="Proteomes" id="UP000000246">
    <property type="component" value="Chromosome"/>
</dbReference>
<dbReference type="GO" id="GO:0005737">
    <property type="term" value="C:cytoplasm"/>
    <property type="evidence" value="ECO:0007669"/>
    <property type="project" value="UniProtKB-SubCell"/>
</dbReference>
<dbReference type="GO" id="GO:0070038">
    <property type="term" value="F:rRNA (pseudouridine-N3-)-methyltransferase activity"/>
    <property type="evidence" value="ECO:0007669"/>
    <property type="project" value="UniProtKB-UniRule"/>
</dbReference>
<dbReference type="CDD" id="cd18081">
    <property type="entry name" value="RlmH-like"/>
    <property type="match status" value="1"/>
</dbReference>
<dbReference type="Gene3D" id="3.40.1280.10">
    <property type="match status" value="1"/>
</dbReference>
<dbReference type="HAMAP" id="MF_00658">
    <property type="entry name" value="23SrRNA_methyltr_H"/>
    <property type="match status" value="1"/>
</dbReference>
<dbReference type="InterPro" id="IPR029028">
    <property type="entry name" value="Alpha/beta_knot_MTases"/>
</dbReference>
<dbReference type="InterPro" id="IPR003742">
    <property type="entry name" value="RlmH-like"/>
</dbReference>
<dbReference type="InterPro" id="IPR029026">
    <property type="entry name" value="tRNA_m1G_MTases_N"/>
</dbReference>
<dbReference type="NCBIfam" id="NF000989">
    <property type="entry name" value="PRK00103.2-3"/>
    <property type="match status" value="1"/>
</dbReference>
<dbReference type="NCBIfam" id="NF000991">
    <property type="entry name" value="PRK00103.2-5"/>
    <property type="match status" value="1"/>
</dbReference>
<dbReference type="PANTHER" id="PTHR33603">
    <property type="entry name" value="METHYLTRANSFERASE"/>
    <property type="match status" value="1"/>
</dbReference>
<dbReference type="PANTHER" id="PTHR33603:SF1">
    <property type="entry name" value="RIBOSOMAL RNA LARGE SUBUNIT METHYLTRANSFERASE H"/>
    <property type="match status" value="1"/>
</dbReference>
<dbReference type="Pfam" id="PF02590">
    <property type="entry name" value="SPOUT_MTase"/>
    <property type="match status" value="1"/>
</dbReference>
<dbReference type="PIRSF" id="PIRSF004505">
    <property type="entry name" value="MT_bac"/>
    <property type="match status" value="1"/>
</dbReference>
<dbReference type="SUPFAM" id="SSF75217">
    <property type="entry name" value="alpha/beta knot"/>
    <property type="match status" value="1"/>
</dbReference>
<organism>
    <name type="scientific">Bradyrhizobium sp. (strain BTAi1 / ATCC BAA-1182)</name>
    <dbReference type="NCBI Taxonomy" id="288000"/>
    <lineage>
        <taxon>Bacteria</taxon>
        <taxon>Pseudomonadati</taxon>
        <taxon>Pseudomonadota</taxon>
        <taxon>Alphaproteobacteria</taxon>
        <taxon>Hyphomicrobiales</taxon>
        <taxon>Nitrobacteraceae</taxon>
        <taxon>Bradyrhizobium</taxon>
    </lineage>
</organism>
<name>RLMH_BRASB</name>
<accession>A5E958</accession>